<accession>P0C417</accession>
<geneLocation type="chloroplast"/>
<comment type="function">
    <text evidence="1">One of the components of the core complex of photosystem II (PSII). PSII is a light-driven water:plastoquinone oxidoreductase that uses light energy to abstract electrons from H(2)O, generating O(2) and a proton gradient subsequently used for ATP formation. It consists of a core antenna complex that captures photons, and an electron transfer chain that converts photonic excitation into a charge separation. This subunit is found at the monomer-monomer interface and is required for correct PSII assembly and/or dimerization.</text>
</comment>
<comment type="subunit">
    <text evidence="1">PSII is composed of 1 copy each of membrane proteins PsbA, PsbB, PsbC, PsbD, PsbE, PsbF, PsbH, PsbI, PsbJ, PsbK, PsbL, PsbM, PsbT, PsbX, PsbY, PsbZ, Psb30/Ycf12, at least 3 peripheral proteins of the oxygen-evolving complex and a large number of cofactors. It forms dimeric complexes.</text>
</comment>
<comment type="subcellular location">
    <subcellularLocation>
        <location evidence="1">Plastid</location>
        <location evidence="1">Chloroplast thylakoid membrane</location>
        <topology evidence="1">Single-pass membrane protein</topology>
    </subcellularLocation>
</comment>
<comment type="similarity">
    <text evidence="1">Belongs to the PsbL family.</text>
</comment>
<protein>
    <recommendedName>
        <fullName evidence="1">Photosystem II reaction center protein L</fullName>
        <shortName evidence="1">PSII-L</shortName>
    </recommendedName>
</protein>
<evidence type="ECO:0000255" key="1">
    <source>
        <dbReference type="HAMAP-Rule" id="MF_01317"/>
    </source>
</evidence>
<organism>
    <name type="scientific">Oryza sativa subsp. indica</name>
    <name type="common">Rice</name>
    <dbReference type="NCBI Taxonomy" id="39946"/>
    <lineage>
        <taxon>Eukaryota</taxon>
        <taxon>Viridiplantae</taxon>
        <taxon>Streptophyta</taxon>
        <taxon>Embryophyta</taxon>
        <taxon>Tracheophyta</taxon>
        <taxon>Spermatophyta</taxon>
        <taxon>Magnoliopsida</taxon>
        <taxon>Liliopsida</taxon>
        <taxon>Poales</taxon>
        <taxon>Poaceae</taxon>
        <taxon>BOP clade</taxon>
        <taxon>Oryzoideae</taxon>
        <taxon>Oryzeae</taxon>
        <taxon>Oryzinae</taxon>
        <taxon>Oryza</taxon>
        <taxon>Oryza sativa</taxon>
    </lineage>
</organism>
<name>PSBL_ORYSI</name>
<keyword id="KW-0150">Chloroplast</keyword>
<keyword id="KW-0472">Membrane</keyword>
<keyword id="KW-0602">Photosynthesis</keyword>
<keyword id="KW-0604">Photosystem II</keyword>
<keyword id="KW-0934">Plastid</keyword>
<keyword id="KW-0674">Reaction center</keyword>
<keyword id="KW-1185">Reference proteome</keyword>
<keyword id="KW-0793">Thylakoid</keyword>
<keyword id="KW-0812">Transmembrane</keyword>
<keyword id="KW-1133">Transmembrane helix</keyword>
<gene>
    <name evidence="1" type="primary">psbL</name>
</gene>
<reference key="1">
    <citation type="journal article" date="2004" name="Plant Physiol.">
        <title>A comparison of rice chloroplast genomes.</title>
        <authorList>
            <person name="Tang J."/>
            <person name="Xia H."/>
            <person name="Cao M."/>
            <person name="Zhang X."/>
            <person name="Zeng W."/>
            <person name="Hu S."/>
            <person name="Tong W."/>
            <person name="Wang J."/>
            <person name="Wang J."/>
            <person name="Yu J."/>
            <person name="Yang H."/>
            <person name="Zhu L."/>
        </authorList>
    </citation>
    <scope>NUCLEOTIDE SEQUENCE [LARGE SCALE GENOMIC DNA]</scope>
    <source>
        <strain>cv. 93-11</strain>
    </source>
</reference>
<dbReference type="EMBL" id="AY522329">
    <property type="status" value="NOT_ANNOTATED_CDS"/>
    <property type="molecule type" value="Genomic_DNA"/>
</dbReference>
<dbReference type="RefSeq" id="YP_009161379.1">
    <property type="nucleotide sequence ID" value="NC_027678.1"/>
</dbReference>
<dbReference type="SMR" id="P0C417"/>
<dbReference type="STRING" id="39946.P0C417"/>
<dbReference type="Proteomes" id="UP000007015">
    <property type="component" value="Chloroplast"/>
</dbReference>
<dbReference type="GO" id="GO:0009535">
    <property type="term" value="C:chloroplast thylakoid membrane"/>
    <property type="evidence" value="ECO:0007669"/>
    <property type="project" value="UniProtKB-SubCell"/>
</dbReference>
<dbReference type="GO" id="GO:0009539">
    <property type="term" value="C:photosystem II reaction center"/>
    <property type="evidence" value="ECO:0007669"/>
    <property type="project" value="InterPro"/>
</dbReference>
<dbReference type="GO" id="GO:0009536">
    <property type="term" value="C:plastid"/>
    <property type="evidence" value="ECO:0000305"/>
    <property type="project" value="Gramene"/>
</dbReference>
<dbReference type="GO" id="GO:0015979">
    <property type="term" value="P:photosynthesis"/>
    <property type="evidence" value="ECO:0007669"/>
    <property type="project" value="UniProtKB-UniRule"/>
</dbReference>
<dbReference type="HAMAP" id="MF_01317">
    <property type="entry name" value="PSII_PsbL"/>
    <property type="match status" value="1"/>
</dbReference>
<dbReference type="InterPro" id="IPR003372">
    <property type="entry name" value="PSII_PsbL"/>
</dbReference>
<dbReference type="InterPro" id="IPR037266">
    <property type="entry name" value="PSII_PsbL_sf"/>
</dbReference>
<dbReference type="NCBIfam" id="NF001972">
    <property type="entry name" value="PRK00753.1"/>
    <property type="match status" value="1"/>
</dbReference>
<dbReference type="Pfam" id="PF02419">
    <property type="entry name" value="PsbL"/>
    <property type="match status" value="1"/>
</dbReference>
<dbReference type="SUPFAM" id="SSF161017">
    <property type="entry name" value="Photosystem II reaction center protein L, PsbL"/>
    <property type="match status" value="1"/>
</dbReference>
<proteinExistence type="inferred from homology"/>
<sequence>MTQSNPNEQNVELNRTSLYWGLLLIFVLAVLFSNYFFN</sequence>
<feature type="chain" id="PRO_0000289569" description="Photosystem II reaction center protein L">
    <location>
        <begin position="1"/>
        <end position="38"/>
    </location>
</feature>
<feature type="transmembrane region" description="Helical" evidence="1">
    <location>
        <begin position="17"/>
        <end position="37"/>
    </location>
</feature>